<accession>B8GQ24</accession>
<feature type="chain" id="PRO_1000199887" description="Urease subunit gamma">
    <location>
        <begin position="1"/>
        <end position="100"/>
    </location>
</feature>
<evidence type="ECO:0000255" key="1">
    <source>
        <dbReference type="HAMAP-Rule" id="MF_00739"/>
    </source>
</evidence>
<proteinExistence type="inferred from homology"/>
<keyword id="KW-0963">Cytoplasm</keyword>
<keyword id="KW-0378">Hydrolase</keyword>
<keyword id="KW-1185">Reference proteome</keyword>
<gene>
    <name evidence="1" type="primary">ureA</name>
    <name type="ordered locus">Tgr7_3102</name>
</gene>
<protein>
    <recommendedName>
        <fullName evidence="1">Urease subunit gamma</fullName>
        <ecNumber evidence="1">3.5.1.5</ecNumber>
    </recommendedName>
    <alternativeName>
        <fullName evidence="1">Urea amidohydrolase subunit gamma</fullName>
    </alternativeName>
</protein>
<reference key="1">
    <citation type="journal article" date="2011" name="Stand. Genomic Sci.">
        <title>Complete genome sequence of 'Thioalkalivibrio sulfidophilus' HL-EbGr7.</title>
        <authorList>
            <person name="Muyzer G."/>
            <person name="Sorokin D.Y."/>
            <person name="Mavromatis K."/>
            <person name="Lapidus A."/>
            <person name="Clum A."/>
            <person name="Ivanova N."/>
            <person name="Pati A."/>
            <person name="d'Haeseleer P."/>
            <person name="Woyke T."/>
            <person name="Kyrpides N.C."/>
        </authorList>
    </citation>
    <scope>NUCLEOTIDE SEQUENCE [LARGE SCALE GENOMIC DNA]</scope>
    <source>
        <strain>HL-EbGR7</strain>
    </source>
</reference>
<comment type="catalytic activity">
    <reaction evidence="1">
        <text>urea + 2 H2O + H(+) = hydrogencarbonate + 2 NH4(+)</text>
        <dbReference type="Rhea" id="RHEA:20557"/>
        <dbReference type="ChEBI" id="CHEBI:15377"/>
        <dbReference type="ChEBI" id="CHEBI:15378"/>
        <dbReference type="ChEBI" id="CHEBI:16199"/>
        <dbReference type="ChEBI" id="CHEBI:17544"/>
        <dbReference type="ChEBI" id="CHEBI:28938"/>
        <dbReference type="EC" id="3.5.1.5"/>
    </reaction>
</comment>
<comment type="pathway">
    <text evidence="1">Nitrogen metabolism; urea degradation; CO(2) and NH(3) from urea (urease route): step 1/1.</text>
</comment>
<comment type="subunit">
    <text evidence="1">Heterotrimer of UreA (gamma), UreB (beta) and UreC (alpha) subunits. Three heterotrimers associate to form the active enzyme.</text>
</comment>
<comment type="subcellular location">
    <subcellularLocation>
        <location evidence="1">Cytoplasm</location>
    </subcellularLocation>
</comment>
<comment type="similarity">
    <text evidence="1">Belongs to the urease gamma subunit family.</text>
</comment>
<sequence length="100" mass="10914">MELTPREKDKLLLFTAALLAERRKARGLKLNYPEAVALISAAILEGARDGRSVAELMSLGGEVLTRDEVMDGVAEMIPEVQVEATFPDGVKLVTVHEPVR</sequence>
<organism>
    <name type="scientific">Thioalkalivibrio sulfidiphilus (strain HL-EbGR7)</name>
    <dbReference type="NCBI Taxonomy" id="396588"/>
    <lineage>
        <taxon>Bacteria</taxon>
        <taxon>Pseudomonadati</taxon>
        <taxon>Pseudomonadota</taxon>
        <taxon>Gammaproteobacteria</taxon>
        <taxon>Chromatiales</taxon>
        <taxon>Ectothiorhodospiraceae</taxon>
        <taxon>Thioalkalivibrio</taxon>
    </lineage>
</organism>
<dbReference type="EC" id="3.5.1.5" evidence="1"/>
<dbReference type="EMBL" id="CP001339">
    <property type="protein sequence ID" value="ACL74171.1"/>
    <property type="molecule type" value="Genomic_DNA"/>
</dbReference>
<dbReference type="RefSeq" id="WP_012639633.1">
    <property type="nucleotide sequence ID" value="NC_011901.1"/>
</dbReference>
<dbReference type="SMR" id="B8GQ24"/>
<dbReference type="STRING" id="396588.Tgr7_3102"/>
<dbReference type="KEGG" id="tgr:Tgr7_3102"/>
<dbReference type="eggNOG" id="COG0831">
    <property type="taxonomic scope" value="Bacteria"/>
</dbReference>
<dbReference type="HOGENOM" id="CLU_145825_1_0_6"/>
<dbReference type="OrthoDB" id="9797217at2"/>
<dbReference type="UniPathway" id="UPA00258">
    <property type="reaction ID" value="UER00370"/>
</dbReference>
<dbReference type="Proteomes" id="UP000002383">
    <property type="component" value="Chromosome"/>
</dbReference>
<dbReference type="GO" id="GO:0005737">
    <property type="term" value="C:cytoplasm"/>
    <property type="evidence" value="ECO:0007669"/>
    <property type="project" value="UniProtKB-SubCell"/>
</dbReference>
<dbReference type="GO" id="GO:0016151">
    <property type="term" value="F:nickel cation binding"/>
    <property type="evidence" value="ECO:0007669"/>
    <property type="project" value="InterPro"/>
</dbReference>
<dbReference type="GO" id="GO:0009039">
    <property type="term" value="F:urease activity"/>
    <property type="evidence" value="ECO:0007669"/>
    <property type="project" value="UniProtKB-UniRule"/>
</dbReference>
<dbReference type="GO" id="GO:0043419">
    <property type="term" value="P:urea catabolic process"/>
    <property type="evidence" value="ECO:0007669"/>
    <property type="project" value="UniProtKB-UniRule"/>
</dbReference>
<dbReference type="CDD" id="cd00390">
    <property type="entry name" value="Urease_gamma"/>
    <property type="match status" value="1"/>
</dbReference>
<dbReference type="Gene3D" id="3.30.280.10">
    <property type="entry name" value="Urease, gamma-like subunit"/>
    <property type="match status" value="1"/>
</dbReference>
<dbReference type="HAMAP" id="MF_00739">
    <property type="entry name" value="Urease_gamma"/>
    <property type="match status" value="1"/>
</dbReference>
<dbReference type="InterPro" id="IPR012010">
    <property type="entry name" value="Urease_gamma"/>
</dbReference>
<dbReference type="InterPro" id="IPR002026">
    <property type="entry name" value="Urease_gamma/gamma-beta_su"/>
</dbReference>
<dbReference type="InterPro" id="IPR036463">
    <property type="entry name" value="Urease_gamma_sf"/>
</dbReference>
<dbReference type="InterPro" id="IPR050069">
    <property type="entry name" value="Urease_subunit"/>
</dbReference>
<dbReference type="NCBIfam" id="NF009712">
    <property type="entry name" value="PRK13241.1"/>
    <property type="match status" value="1"/>
</dbReference>
<dbReference type="NCBIfam" id="TIGR00193">
    <property type="entry name" value="urease_gam"/>
    <property type="match status" value="1"/>
</dbReference>
<dbReference type="PANTHER" id="PTHR33569">
    <property type="entry name" value="UREASE"/>
    <property type="match status" value="1"/>
</dbReference>
<dbReference type="PANTHER" id="PTHR33569:SF1">
    <property type="entry name" value="UREASE"/>
    <property type="match status" value="1"/>
</dbReference>
<dbReference type="Pfam" id="PF00547">
    <property type="entry name" value="Urease_gamma"/>
    <property type="match status" value="1"/>
</dbReference>
<dbReference type="PIRSF" id="PIRSF001223">
    <property type="entry name" value="Urease_gamma"/>
    <property type="match status" value="1"/>
</dbReference>
<dbReference type="SUPFAM" id="SSF54111">
    <property type="entry name" value="Urease, gamma-subunit"/>
    <property type="match status" value="1"/>
</dbReference>
<name>URE3_THISH</name>